<dbReference type="EMBL" id="LT708304">
    <property type="protein sequence ID" value="SIU00120.1"/>
    <property type="molecule type" value="Genomic_DNA"/>
</dbReference>
<dbReference type="RefSeq" id="NP_855169.1">
    <property type="nucleotide sequence ID" value="NC_002945.3"/>
</dbReference>
<dbReference type="RefSeq" id="WP_003407530.1">
    <property type="nucleotide sequence ID" value="NC_002945.4"/>
</dbReference>
<dbReference type="SMR" id="P64856"/>
<dbReference type="KEGG" id="mbo:BQ2027_MB1517"/>
<dbReference type="PATRIC" id="fig|233413.5.peg.1658"/>
<dbReference type="Proteomes" id="UP000001419">
    <property type="component" value="Chromosome"/>
</dbReference>
<dbReference type="GO" id="GO:0005886">
    <property type="term" value="C:plasma membrane"/>
    <property type="evidence" value="ECO:0007669"/>
    <property type="project" value="UniProtKB-SubCell"/>
</dbReference>
<dbReference type="CDD" id="cd00198">
    <property type="entry name" value="vWFA"/>
    <property type="match status" value="1"/>
</dbReference>
<dbReference type="FunFam" id="3.40.50.410:FF:000078">
    <property type="entry name" value="UPF0353 protein RN09_1826"/>
    <property type="match status" value="1"/>
</dbReference>
<dbReference type="Gene3D" id="3.40.50.410">
    <property type="entry name" value="von Willebrand factor, type A domain"/>
    <property type="match status" value="1"/>
</dbReference>
<dbReference type="HAMAP" id="MF_01340">
    <property type="entry name" value="UPF0353"/>
    <property type="match status" value="1"/>
</dbReference>
<dbReference type="InterPro" id="IPR024163">
    <property type="entry name" value="Aerotolerance_reg_N"/>
</dbReference>
<dbReference type="InterPro" id="IPR022933">
    <property type="entry name" value="UPF0353"/>
</dbReference>
<dbReference type="InterPro" id="IPR050768">
    <property type="entry name" value="UPF0353/GerABKA_families"/>
</dbReference>
<dbReference type="InterPro" id="IPR002035">
    <property type="entry name" value="VWF_A"/>
</dbReference>
<dbReference type="InterPro" id="IPR036465">
    <property type="entry name" value="vWFA_dom_sf"/>
</dbReference>
<dbReference type="NCBIfam" id="NF010238">
    <property type="entry name" value="PRK13685.1"/>
    <property type="match status" value="1"/>
</dbReference>
<dbReference type="PANTHER" id="PTHR22550:SF5">
    <property type="entry name" value="LEUCINE ZIPPER PROTEIN 4"/>
    <property type="match status" value="1"/>
</dbReference>
<dbReference type="PANTHER" id="PTHR22550">
    <property type="entry name" value="SPORE GERMINATION PROTEIN"/>
    <property type="match status" value="1"/>
</dbReference>
<dbReference type="Pfam" id="PF07584">
    <property type="entry name" value="BatA"/>
    <property type="match status" value="1"/>
</dbReference>
<dbReference type="Pfam" id="PF13519">
    <property type="entry name" value="VWA_2"/>
    <property type="match status" value="1"/>
</dbReference>
<dbReference type="SMART" id="SM00327">
    <property type="entry name" value="VWA"/>
    <property type="match status" value="1"/>
</dbReference>
<dbReference type="SUPFAM" id="SSF53300">
    <property type="entry name" value="vWA-like"/>
    <property type="match status" value="1"/>
</dbReference>
<dbReference type="PROSITE" id="PS50234">
    <property type="entry name" value="VWFA"/>
    <property type="match status" value="1"/>
</dbReference>
<keyword id="KW-1003">Cell membrane</keyword>
<keyword id="KW-0472">Membrane</keyword>
<keyword id="KW-1185">Reference proteome</keyword>
<keyword id="KW-0812">Transmembrane</keyword>
<keyword id="KW-1133">Transmembrane helix</keyword>
<evidence type="ECO:0000255" key="1">
    <source>
        <dbReference type="HAMAP-Rule" id="MF_01340"/>
    </source>
</evidence>
<proteinExistence type="inferred from homology"/>
<organism>
    <name type="scientific">Mycobacterium bovis (strain ATCC BAA-935 / AF2122/97)</name>
    <dbReference type="NCBI Taxonomy" id="233413"/>
    <lineage>
        <taxon>Bacteria</taxon>
        <taxon>Bacillati</taxon>
        <taxon>Actinomycetota</taxon>
        <taxon>Actinomycetes</taxon>
        <taxon>Mycobacteriales</taxon>
        <taxon>Mycobacteriaceae</taxon>
        <taxon>Mycobacterium</taxon>
        <taxon>Mycobacterium tuberculosis complex</taxon>
    </lineage>
</organism>
<name>Y1517_MYCBO</name>
<reference key="1">
    <citation type="journal article" date="2003" name="Proc. Natl. Acad. Sci. U.S.A.">
        <title>The complete genome sequence of Mycobacterium bovis.</title>
        <authorList>
            <person name="Garnier T."/>
            <person name="Eiglmeier K."/>
            <person name="Camus J.-C."/>
            <person name="Medina N."/>
            <person name="Mansoor H."/>
            <person name="Pryor M."/>
            <person name="Duthoy S."/>
            <person name="Grondin S."/>
            <person name="Lacroix C."/>
            <person name="Monsempe C."/>
            <person name="Simon S."/>
            <person name="Harris B."/>
            <person name="Atkin R."/>
            <person name="Doggett J."/>
            <person name="Mayes R."/>
            <person name="Keating L."/>
            <person name="Wheeler P.R."/>
            <person name="Parkhill J."/>
            <person name="Barrell B.G."/>
            <person name="Cole S.T."/>
            <person name="Gordon S.V."/>
            <person name="Hewinson R.G."/>
        </authorList>
    </citation>
    <scope>NUCLEOTIDE SEQUENCE [LARGE SCALE GENOMIC DNA]</scope>
    <source>
        <strain>ATCC BAA-935 / AF2122/97</strain>
    </source>
</reference>
<reference key="2">
    <citation type="journal article" date="2017" name="Genome Announc.">
        <title>Updated reference genome sequence and annotation of Mycobacterium bovis AF2122/97.</title>
        <authorList>
            <person name="Malone K.M."/>
            <person name="Farrell D."/>
            <person name="Stuber T.P."/>
            <person name="Schubert O.T."/>
            <person name="Aebersold R."/>
            <person name="Robbe-Austerman S."/>
            <person name="Gordon S.V."/>
        </authorList>
    </citation>
    <scope>NUCLEOTIDE SEQUENCE [LARGE SCALE GENOMIC DNA]</scope>
    <scope>GENOME REANNOTATION</scope>
    <source>
        <strain>ATCC BAA-935 / AF2122/97</strain>
    </source>
</reference>
<feature type="chain" id="PRO_0000057643" description="UPF0353 protein Mb1517">
    <location>
        <begin position="1"/>
        <end position="335"/>
    </location>
</feature>
<feature type="transmembrane region" description="Helical" evidence="1">
    <location>
        <begin position="18"/>
        <end position="38"/>
    </location>
</feature>
<feature type="transmembrane region" description="Helical" evidence="1">
    <location>
        <begin position="67"/>
        <end position="87"/>
    </location>
</feature>
<feature type="transmembrane region" description="Helical" evidence="1">
    <location>
        <begin position="309"/>
        <end position="329"/>
    </location>
</feature>
<feature type="domain" description="VWFA" evidence="1">
    <location>
        <begin position="98"/>
        <end position="294"/>
    </location>
</feature>
<protein>
    <recommendedName>
        <fullName evidence="1">UPF0353 protein Mb1517</fullName>
    </recommendedName>
</protein>
<comment type="subcellular location">
    <subcellularLocation>
        <location evidence="1">Cell membrane</location>
        <topology evidence="1">Multi-pass membrane protein</topology>
    </subcellularLocation>
</comment>
<comment type="similarity">
    <text evidence="1">Belongs to the UPF0353 family.</text>
</comment>
<gene>
    <name type="ordered locus">BQ2027_MB1517</name>
</gene>
<sequence>MTLPLLGPMTLSGFAHSWFFLFLFVVAGLVALYILMQLARQRRMLRFANMELLESVAPKRPSRWRHVPAILLVLSLLLFTIAMAGPTHDVRIPRNRAVVMLVIDVSQSMRATDVEPSRMVAAQEAAKQFADELTPGINLGLIAYAGTATVLVSPTTNREATKNALDKLQFADRTATGEAIFTALQAIATVGAVIGGGDTPPPARIVLFSDGKETMPTNPDNPKGAYTAARTAKDQGVPISTISFGTPYGFVEINDQRQPVPVDDETMKKVAQLSGGNSYNAATLAELRAVYSSLQQQIGYETIKGDASVGWLRLGALALALAALAALLINRRLPT</sequence>
<accession>P64856</accession>
<accession>A0A1R3XYH9</accession>
<accession>P71762</accession>
<accession>X2BII7</accession>